<evidence type="ECO:0000255" key="1">
    <source>
        <dbReference type="HAMAP-Rule" id="MF_01345"/>
    </source>
</evidence>
<evidence type="ECO:0000305" key="2"/>
<proteinExistence type="inferred from homology"/>
<dbReference type="EMBL" id="CP000961">
    <property type="protein sequence ID" value="ACA88931.1"/>
    <property type="molecule type" value="Genomic_DNA"/>
</dbReference>
<dbReference type="RefSeq" id="WP_012327254.1">
    <property type="nucleotide sequence ID" value="NC_010506.1"/>
</dbReference>
<dbReference type="SMR" id="B1KMX4"/>
<dbReference type="STRING" id="392500.Swoo_4681"/>
<dbReference type="KEGG" id="swd:Swoo_4681"/>
<dbReference type="eggNOG" id="COG0186">
    <property type="taxonomic scope" value="Bacteria"/>
</dbReference>
<dbReference type="HOGENOM" id="CLU_073626_1_1_6"/>
<dbReference type="Proteomes" id="UP000002168">
    <property type="component" value="Chromosome"/>
</dbReference>
<dbReference type="GO" id="GO:0022627">
    <property type="term" value="C:cytosolic small ribosomal subunit"/>
    <property type="evidence" value="ECO:0007669"/>
    <property type="project" value="TreeGrafter"/>
</dbReference>
<dbReference type="GO" id="GO:0019843">
    <property type="term" value="F:rRNA binding"/>
    <property type="evidence" value="ECO:0007669"/>
    <property type="project" value="UniProtKB-UniRule"/>
</dbReference>
<dbReference type="GO" id="GO:0003735">
    <property type="term" value="F:structural constituent of ribosome"/>
    <property type="evidence" value="ECO:0007669"/>
    <property type="project" value="InterPro"/>
</dbReference>
<dbReference type="GO" id="GO:0006412">
    <property type="term" value="P:translation"/>
    <property type="evidence" value="ECO:0007669"/>
    <property type="project" value="UniProtKB-UniRule"/>
</dbReference>
<dbReference type="CDD" id="cd00364">
    <property type="entry name" value="Ribosomal_uS17"/>
    <property type="match status" value="1"/>
</dbReference>
<dbReference type="FunFam" id="2.40.50.140:FF:000014">
    <property type="entry name" value="30S ribosomal protein S17"/>
    <property type="match status" value="1"/>
</dbReference>
<dbReference type="Gene3D" id="2.40.50.140">
    <property type="entry name" value="Nucleic acid-binding proteins"/>
    <property type="match status" value="1"/>
</dbReference>
<dbReference type="HAMAP" id="MF_01345_B">
    <property type="entry name" value="Ribosomal_uS17_B"/>
    <property type="match status" value="1"/>
</dbReference>
<dbReference type="InterPro" id="IPR012340">
    <property type="entry name" value="NA-bd_OB-fold"/>
</dbReference>
<dbReference type="InterPro" id="IPR000266">
    <property type="entry name" value="Ribosomal_uS17"/>
</dbReference>
<dbReference type="InterPro" id="IPR019984">
    <property type="entry name" value="Ribosomal_uS17_bact/chlr"/>
</dbReference>
<dbReference type="InterPro" id="IPR019979">
    <property type="entry name" value="Ribosomal_uS17_CS"/>
</dbReference>
<dbReference type="NCBIfam" id="NF004123">
    <property type="entry name" value="PRK05610.1"/>
    <property type="match status" value="1"/>
</dbReference>
<dbReference type="NCBIfam" id="TIGR03635">
    <property type="entry name" value="uS17_bact"/>
    <property type="match status" value="1"/>
</dbReference>
<dbReference type="PANTHER" id="PTHR10744">
    <property type="entry name" value="40S RIBOSOMAL PROTEIN S11 FAMILY MEMBER"/>
    <property type="match status" value="1"/>
</dbReference>
<dbReference type="PANTHER" id="PTHR10744:SF1">
    <property type="entry name" value="SMALL RIBOSOMAL SUBUNIT PROTEIN US17M"/>
    <property type="match status" value="1"/>
</dbReference>
<dbReference type="Pfam" id="PF00366">
    <property type="entry name" value="Ribosomal_S17"/>
    <property type="match status" value="1"/>
</dbReference>
<dbReference type="PRINTS" id="PR00973">
    <property type="entry name" value="RIBOSOMALS17"/>
</dbReference>
<dbReference type="SUPFAM" id="SSF50249">
    <property type="entry name" value="Nucleic acid-binding proteins"/>
    <property type="match status" value="1"/>
</dbReference>
<dbReference type="PROSITE" id="PS00056">
    <property type="entry name" value="RIBOSOMAL_S17"/>
    <property type="match status" value="1"/>
</dbReference>
<accession>B1KMX4</accession>
<keyword id="KW-1185">Reference proteome</keyword>
<keyword id="KW-0687">Ribonucleoprotein</keyword>
<keyword id="KW-0689">Ribosomal protein</keyword>
<keyword id="KW-0694">RNA-binding</keyword>
<keyword id="KW-0699">rRNA-binding</keyword>
<reference key="1">
    <citation type="submission" date="2008-02" db="EMBL/GenBank/DDBJ databases">
        <title>Complete sequence of Shewanella woodyi ATCC 51908.</title>
        <authorList>
            <consortium name="US DOE Joint Genome Institute"/>
            <person name="Copeland A."/>
            <person name="Lucas S."/>
            <person name="Lapidus A."/>
            <person name="Glavina del Rio T."/>
            <person name="Dalin E."/>
            <person name="Tice H."/>
            <person name="Bruce D."/>
            <person name="Goodwin L."/>
            <person name="Pitluck S."/>
            <person name="Sims D."/>
            <person name="Brettin T."/>
            <person name="Detter J.C."/>
            <person name="Han C."/>
            <person name="Kuske C.R."/>
            <person name="Schmutz J."/>
            <person name="Larimer F."/>
            <person name="Land M."/>
            <person name="Hauser L."/>
            <person name="Kyrpides N."/>
            <person name="Lykidis A."/>
            <person name="Zhao J.-S."/>
            <person name="Richardson P."/>
        </authorList>
    </citation>
    <scope>NUCLEOTIDE SEQUENCE [LARGE SCALE GENOMIC DNA]</scope>
    <source>
        <strain>ATCC 51908 / MS32</strain>
    </source>
</reference>
<comment type="function">
    <text evidence="1">One of the primary rRNA binding proteins, it binds specifically to the 5'-end of 16S ribosomal RNA.</text>
</comment>
<comment type="subunit">
    <text evidence="1">Part of the 30S ribosomal subunit.</text>
</comment>
<comment type="similarity">
    <text evidence="1">Belongs to the universal ribosomal protein uS17 family.</text>
</comment>
<organism>
    <name type="scientific">Shewanella woodyi (strain ATCC 51908 / MS32)</name>
    <dbReference type="NCBI Taxonomy" id="392500"/>
    <lineage>
        <taxon>Bacteria</taxon>
        <taxon>Pseudomonadati</taxon>
        <taxon>Pseudomonadota</taxon>
        <taxon>Gammaproteobacteria</taxon>
        <taxon>Alteromonadales</taxon>
        <taxon>Shewanellaceae</taxon>
        <taxon>Shewanella</taxon>
    </lineage>
</organism>
<feature type="chain" id="PRO_1000143303" description="Small ribosomal subunit protein uS17">
    <location>
        <begin position="1"/>
        <end position="82"/>
    </location>
</feature>
<protein>
    <recommendedName>
        <fullName evidence="1">Small ribosomal subunit protein uS17</fullName>
    </recommendedName>
    <alternativeName>
        <fullName evidence="2">30S ribosomal protein S17</fullName>
    </alternativeName>
</protein>
<sequence>MSDTIRTLQGRVLSNKMDKSITVAIERKVKHPLYGKFLKRTTKIHAHDEQNQCNAGDVVTIRECRPLSKTKSWTLVEVVTKA</sequence>
<name>RS17_SHEWM</name>
<gene>
    <name evidence="1" type="primary">rpsQ</name>
    <name type="ordered locus">Swoo_4681</name>
</gene>